<gene>
    <name evidence="1" type="primary">phnW</name>
    <name type="ordered locus">Bcer98_1052</name>
</gene>
<protein>
    <recommendedName>
        <fullName evidence="1">2-aminoethylphosphonate--pyruvate transaminase</fullName>
        <ecNumber evidence="1">2.6.1.37</ecNumber>
    </recommendedName>
    <alternativeName>
        <fullName evidence="1">2-aminoethylphosphonate aminotransferase</fullName>
    </alternativeName>
    <alternativeName>
        <fullName evidence="1">AEP transaminase</fullName>
        <shortName evidence="1">AEPT</shortName>
    </alternativeName>
</protein>
<reference key="1">
    <citation type="journal article" date="2008" name="Chem. Biol. Interact.">
        <title>Extending the Bacillus cereus group genomics to putative food-borne pathogens of different toxicity.</title>
        <authorList>
            <person name="Lapidus A."/>
            <person name="Goltsman E."/>
            <person name="Auger S."/>
            <person name="Galleron N."/>
            <person name="Segurens B."/>
            <person name="Dossat C."/>
            <person name="Land M.L."/>
            <person name="Broussolle V."/>
            <person name="Brillard J."/>
            <person name="Guinebretiere M.-H."/>
            <person name="Sanchis V."/>
            <person name="Nguen-the C."/>
            <person name="Lereclus D."/>
            <person name="Richardson P."/>
            <person name="Wincker P."/>
            <person name="Weissenbach J."/>
            <person name="Ehrlich S.D."/>
            <person name="Sorokin A."/>
        </authorList>
    </citation>
    <scope>NUCLEOTIDE SEQUENCE [LARGE SCALE GENOMIC DNA]</scope>
    <source>
        <strain>DSM 22905 / CIP 110041 / 391-98 / NVH 391-98</strain>
    </source>
</reference>
<feature type="chain" id="PRO_1000087289" description="2-aminoethylphosphonate--pyruvate transaminase">
    <location>
        <begin position="1"/>
        <end position="365"/>
    </location>
</feature>
<feature type="modified residue" description="N6-(pyridoxal phosphate)lysine" evidence="1">
    <location>
        <position position="194"/>
    </location>
</feature>
<proteinExistence type="inferred from homology"/>
<comment type="function">
    <text evidence="1">Involved in phosphonate degradation.</text>
</comment>
<comment type="catalytic activity">
    <reaction evidence="1">
        <text>(2-aminoethyl)phosphonate + pyruvate = phosphonoacetaldehyde + L-alanine</text>
        <dbReference type="Rhea" id="RHEA:17021"/>
        <dbReference type="ChEBI" id="CHEBI:15361"/>
        <dbReference type="ChEBI" id="CHEBI:57418"/>
        <dbReference type="ChEBI" id="CHEBI:57972"/>
        <dbReference type="ChEBI" id="CHEBI:58383"/>
        <dbReference type="EC" id="2.6.1.37"/>
    </reaction>
</comment>
<comment type="cofactor">
    <cofactor evidence="1">
        <name>pyridoxal 5'-phosphate</name>
        <dbReference type="ChEBI" id="CHEBI:597326"/>
    </cofactor>
</comment>
<comment type="subunit">
    <text evidence="1">Homodimer.</text>
</comment>
<comment type="similarity">
    <text evidence="1">Belongs to the class-V pyridoxal-phosphate-dependent aminotransferase family. PhnW subfamily.</text>
</comment>
<sequence length="365" mass="41330">MKNHHYLLLTPGPLTTTKTVKEVMLYDWCTWDTEYNELVQEIRKRLVSLATKEEEYYTTVFMQGSGTFSVESVIGSVIPQEGKLLVCTNGAYGKRIVQIATTLHINVVESYTNEWEPTNLAEVEEILQKDSEITHIAVVHCETTTGIINPIADVCRLGKQYGKVTIVDAMSSFGGVEMDVADLQIDFMISSANKCIQGVPGFGFVIAKRTELEQCKGRARSLSLDLYDQWETMELQNGKWRFTSPTHTVRAFYQALLELEEEGGVKARNTRYRNNQQVLVKRMREVGFEPLLDEAYQSPIITSFLYPGEGFTFQQLYEELKEHGFVIYPGKISKVDTFRIGNIGDVYESDIHQLVDCISEGVVIG</sequence>
<organism>
    <name type="scientific">Bacillus cytotoxicus (strain DSM 22905 / CIP 110041 / 391-98 / NVH 391-98)</name>
    <dbReference type="NCBI Taxonomy" id="315749"/>
    <lineage>
        <taxon>Bacteria</taxon>
        <taxon>Bacillati</taxon>
        <taxon>Bacillota</taxon>
        <taxon>Bacilli</taxon>
        <taxon>Bacillales</taxon>
        <taxon>Bacillaceae</taxon>
        <taxon>Bacillus</taxon>
        <taxon>Bacillus cereus group</taxon>
    </lineage>
</organism>
<keyword id="KW-0032">Aminotransferase</keyword>
<keyword id="KW-0663">Pyridoxal phosphate</keyword>
<keyword id="KW-0670">Pyruvate</keyword>
<keyword id="KW-0808">Transferase</keyword>
<evidence type="ECO:0000255" key="1">
    <source>
        <dbReference type="HAMAP-Rule" id="MF_01376"/>
    </source>
</evidence>
<accession>A7GMM0</accession>
<name>PHNW_BACCN</name>
<dbReference type="EC" id="2.6.1.37" evidence="1"/>
<dbReference type="EMBL" id="CP000764">
    <property type="protein sequence ID" value="ABS21378.1"/>
    <property type="molecule type" value="Genomic_DNA"/>
</dbReference>
<dbReference type="RefSeq" id="WP_011984131.1">
    <property type="nucleotide sequence ID" value="NC_009674.1"/>
</dbReference>
<dbReference type="SMR" id="A7GMM0"/>
<dbReference type="STRING" id="315749.Bcer98_1052"/>
<dbReference type="GeneID" id="33896410"/>
<dbReference type="KEGG" id="bcy:Bcer98_1052"/>
<dbReference type="eggNOG" id="COG0075">
    <property type="taxonomic scope" value="Bacteria"/>
</dbReference>
<dbReference type="HOGENOM" id="CLU_027686_3_1_9"/>
<dbReference type="OrthoDB" id="389074at2"/>
<dbReference type="Proteomes" id="UP000002300">
    <property type="component" value="Chromosome"/>
</dbReference>
<dbReference type="GO" id="GO:0047304">
    <property type="term" value="F:2-aminoethylphosphonate-pyruvate transaminase activity"/>
    <property type="evidence" value="ECO:0007669"/>
    <property type="project" value="UniProtKB-UniRule"/>
</dbReference>
<dbReference type="GO" id="GO:0019700">
    <property type="term" value="P:organic phosphonate catabolic process"/>
    <property type="evidence" value="ECO:0007669"/>
    <property type="project" value="InterPro"/>
</dbReference>
<dbReference type="Gene3D" id="3.90.1150.10">
    <property type="entry name" value="Aspartate Aminotransferase, domain 1"/>
    <property type="match status" value="1"/>
</dbReference>
<dbReference type="Gene3D" id="3.40.640.10">
    <property type="entry name" value="Type I PLP-dependent aspartate aminotransferase-like (Major domain)"/>
    <property type="match status" value="1"/>
</dbReference>
<dbReference type="HAMAP" id="MF_01376">
    <property type="entry name" value="PhnW_aminotrans_5"/>
    <property type="match status" value="1"/>
</dbReference>
<dbReference type="InterPro" id="IPR000192">
    <property type="entry name" value="Aminotrans_V_dom"/>
</dbReference>
<dbReference type="InterPro" id="IPR012703">
    <property type="entry name" value="NH2EtPonate_pyrv_transaminase"/>
</dbReference>
<dbReference type="InterPro" id="IPR015424">
    <property type="entry name" value="PyrdxlP-dep_Trfase"/>
</dbReference>
<dbReference type="InterPro" id="IPR015421">
    <property type="entry name" value="PyrdxlP-dep_Trfase_major"/>
</dbReference>
<dbReference type="InterPro" id="IPR015422">
    <property type="entry name" value="PyrdxlP-dep_Trfase_small"/>
</dbReference>
<dbReference type="InterPro" id="IPR024169">
    <property type="entry name" value="SP_NH2Trfase/AEP_transaminase"/>
</dbReference>
<dbReference type="NCBIfam" id="TIGR03301">
    <property type="entry name" value="PhnW-AepZ"/>
    <property type="match status" value="1"/>
</dbReference>
<dbReference type="NCBIfam" id="NF010006">
    <property type="entry name" value="PRK13479.1"/>
    <property type="match status" value="1"/>
</dbReference>
<dbReference type="NCBIfam" id="TIGR02326">
    <property type="entry name" value="transamin_PhnW"/>
    <property type="match status" value="1"/>
</dbReference>
<dbReference type="PANTHER" id="PTHR42778">
    <property type="entry name" value="2-AMINOETHYLPHOSPHONATE--PYRUVATE TRANSAMINASE"/>
    <property type="match status" value="1"/>
</dbReference>
<dbReference type="PANTHER" id="PTHR42778:SF1">
    <property type="entry name" value="2-AMINOETHYLPHOSPHONATE--PYRUVATE TRANSAMINASE"/>
    <property type="match status" value="1"/>
</dbReference>
<dbReference type="Pfam" id="PF00266">
    <property type="entry name" value="Aminotran_5"/>
    <property type="match status" value="1"/>
</dbReference>
<dbReference type="PIRSF" id="PIRSF000524">
    <property type="entry name" value="SPT"/>
    <property type="match status" value="1"/>
</dbReference>
<dbReference type="SUPFAM" id="SSF53383">
    <property type="entry name" value="PLP-dependent transferases"/>
    <property type="match status" value="1"/>
</dbReference>